<gene>
    <name evidence="2" type="primary">argI</name>
    <name type="ordered locus">EcHS_A4510</name>
</gene>
<comment type="function">
    <text evidence="1">Reversibly catalyzes the transfer of the carbamoyl group from carbamoyl phosphate (CP) to the N(epsilon) atom of ornithine (ORN) to produce L-citrulline.</text>
</comment>
<comment type="catalytic activity">
    <reaction evidence="2">
        <text>carbamoyl phosphate + L-ornithine = L-citrulline + phosphate + H(+)</text>
        <dbReference type="Rhea" id="RHEA:19513"/>
        <dbReference type="ChEBI" id="CHEBI:15378"/>
        <dbReference type="ChEBI" id="CHEBI:43474"/>
        <dbReference type="ChEBI" id="CHEBI:46911"/>
        <dbReference type="ChEBI" id="CHEBI:57743"/>
        <dbReference type="ChEBI" id="CHEBI:58228"/>
        <dbReference type="EC" id="2.1.3.3"/>
    </reaction>
</comment>
<comment type="pathway">
    <text evidence="2">Amino-acid biosynthesis; L-arginine biosynthesis; L-arginine from L-ornithine and carbamoyl phosphate: step 1/3.</text>
</comment>
<comment type="subcellular location">
    <subcellularLocation>
        <location evidence="2">Cytoplasm</location>
    </subcellularLocation>
</comment>
<comment type="similarity">
    <text evidence="2">Belongs to the aspartate/ornithine carbamoyltransferase superfamily. OTCase family.</text>
</comment>
<feature type="chain" id="PRO_1000084844" description="Ornithine carbamoyltransferase">
    <location>
        <begin position="1"/>
        <end position="334"/>
    </location>
</feature>
<feature type="binding site" evidence="2">
    <location>
        <begin position="56"/>
        <end position="59"/>
    </location>
    <ligand>
        <name>carbamoyl phosphate</name>
        <dbReference type="ChEBI" id="CHEBI:58228"/>
    </ligand>
</feature>
<feature type="binding site" evidence="2">
    <location>
        <position position="83"/>
    </location>
    <ligand>
        <name>carbamoyl phosphate</name>
        <dbReference type="ChEBI" id="CHEBI:58228"/>
    </ligand>
</feature>
<feature type="binding site" evidence="2">
    <location>
        <position position="107"/>
    </location>
    <ligand>
        <name>carbamoyl phosphate</name>
        <dbReference type="ChEBI" id="CHEBI:58228"/>
    </ligand>
</feature>
<feature type="binding site" evidence="2">
    <location>
        <begin position="134"/>
        <end position="137"/>
    </location>
    <ligand>
        <name>carbamoyl phosphate</name>
        <dbReference type="ChEBI" id="CHEBI:58228"/>
    </ligand>
</feature>
<feature type="binding site" evidence="2">
    <location>
        <position position="168"/>
    </location>
    <ligand>
        <name>L-ornithine</name>
        <dbReference type="ChEBI" id="CHEBI:46911"/>
    </ligand>
</feature>
<feature type="binding site" evidence="2">
    <location>
        <position position="232"/>
    </location>
    <ligand>
        <name>L-ornithine</name>
        <dbReference type="ChEBI" id="CHEBI:46911"/>
    </ligand>
</feature>
<feature type="binding site" evidence="2">
    <location>
        <begin position="236"/>
        <end position="237"/>
    </location>
    <ligand>
        <name>L-ornithine</name>
        <dbReference type="ChEBI" id="CHEBI:46911"/>
    </ligand>
</feature>
<feature type="binding site" evidence="2">
    <location>
        <begin position="274"/>
        <end position="275"/>
    </location>
    <ligand>
        <name>carbamoyl phosphate</name>
        <dbReference type="ChEBI" id="CHEBI:58228"/>
    </ligand>
</feature>
<feature type="binding site" evidence="2">
    <location>
        <position position="320"/>
    </location>
    <ligand>
        <name>carbamoyl phosphate</name>
        <dbReference type="ChEBI" id="CHEBI:58228"/>
    </ligand>
</feature>
<sequence length="334" mass="36863">MSGFYHKHFLKLLDFTPAELNSLLQLAAKLKADKKSGKEEAKLTGKNIALIFEKDSTRTRCSFEVAAYDQGARVTYLGPSGSQIGHKESIKDTARVLGRMYDGIQYRGYGQEIVETLAEYAGVPVWNGLTNEFHPTQLLADLLTMQEHLPGKAFNEMTLVYAGDARNNMGNSMLEAAALTGLDLRLVAPQACWPEAALVTECRALAQQNGGNITLTEDVAKGVEGADFIYTDVWVSMGEAKEKWAERIALLRDYQVNSKMMQLTGNPEVKFLHCLPAFHDDQTTLGKKMAEEFGLHGGMEVTDEVFESAASIVFDQAENRMHTIKAVMVATLSK</sequence>
<dbReference type="EC" id="2.1.3.3" evidence="2"/>
<dbReference type="EMBL" id="CP000802">
    <property type="protein sequence ID" value="ABV08664.1"/>
    <property type="molecule type" value="Genomic_DNA"/>
</dbReference>
<dbReference type="SMR" id="A8A810"/>
<dbReference type="KEGG" id="ecx:EcHS_A4510"/>
<dbReference type="HOGENOM" id="CLU_043846_3_1_6"/>
<dbReference type="UniPathway" id="UPA00068">
    <property type="reaction ID" value="UER00112"/>
</dbReference>
<dbReference type="GO" id="GO:0005737">
    <property type="term" value="C:cytoplasm"/>
    <property type="evidence" value="ECO:0007669"/>
    <property type="project" value="UniProtKB-SubCell"/>
</dbReference>
<dbReference type="GO" id="GO:0016597">
    <property type="term" value="F:amino acid binding"/>
    <property type="evidence" value="ECO:0007669"/>
    <property type="project" value="InterPro"/>
</dbReference>
<dbReference type="GO" id="GO:0004585">
    <property type="term" value="F:ornithine carbamoyltransferase activity"/>
    <property type="evidence" value="ECO:0007669"/>
    <property type="project" value="UniProtKB-UniRule"/>
</dbReference>
<dbReference type="GO" id="GO:0042450">
    <property type="term" value="P:arginine biosynthetic process via ornithine"/>
    <property type="evidence" value="ECO:0007669"/>
    <property type="project" value="TreeGrafter"/>
</dbReference>
<dbReference type="GO" id="GO:0019240">
    <property type="term" value="P:citrulline biosynthetic process"/>
    <property type="evidence" value="ECO:0007669"/>
    <property type="project" value="TreeGrafter"/>
</dbReference>
<dbReference type="GO" id="GO:0006526">
    <property type="term" value="P:L-arginine biosynthetic process"/>
    <property type="evidence" value="ECO:0007669"/>
    <property type="project" value="UniProtKB-UniRule"/>
</dbReference>
<dbReference type="FunFam" id="3.40.50.1370:FF:000003">
    <property type="entry name" value="Ornithine carbamoyltransferase"/>
    <property type="match status" value="1"/>
</dbReference>
<dbReference type="FunFam" id="3.40.50.1370:FF:000004">
    <property type="entry name" value="Ornithine carbamoyltransferase"/>
    <property type="match status" value="1"/>
</dbReference>
<dbReference type="Gene3D" id="3.40.50.1370">
    <property type="entry name" value="Aspartate/ornithine carbamoyltransferase"/>
    <property type="match status" value="2"/>
</dbReference>
<dbReference type="HAMAP" id="MF_01109">
    <property type="entry name" value="OTCase"/>
    <property type="match status" value="1"/>
</dbReference>
<dbReference type="InterPro" id="IPR006132">
    <property type="entry name" value="Asp/Orn_carbamoyltranf_P-bd"/>
</dbReference>
<dbReference type="InterPro" id="IPR006130">
    <property type="entry name" value="Asp/Orn_carbamoylTrfase"/>
</dbReference>
<dbReference type="InterPro" id="IPR036901">
    <property type="entry name" value="Asp/Orn_carbamoylTrfase_sf"/>
</dbReference>
<dbReference type="InterPro" id="IPR006131">
    <property type="entry name" value="Asp_carbamoyltransf_Asp/Orn-bd"/>
</dbReference>
<dbReference type="InterPro" id="IPR002292">
    <property type="entry name" value="Orn/put_carbamltrans"/>
</dbReference>
<dbReference type="InterPro" id="IPR024904">
    <property type="entry name" value="OTCase_ArgI"/>
</dbReference>
<dbReference type="NCBIfam" id="TIGR00658">
    <property type="entry name" value="orni_carb_tr"/>
    <property type="match status" value="1"/>
</dbReference>
<dbReference type="NCBIfam" id="NF003286">
    <property type="entry name" value="PRK04284.1"/>
    <property type="match status" value="1"/>
</dbReference>
<dbReference type="NCBIfam" id="NF009213">
    <property type="entry name" value="PRK12562.1"/>
    <property type="match status" value="1"/>
</dbReference>
<dbReference type="PANTHER" id="PTHR45753:SF4">
    <property type="entry name" value="ORNITHINE CARBAMOYLTRANSFERASE SUBUNIT F-RELATED"/>
    <property type="match status" value="1"/>
</dbReference>
<dbReference type="PANTHER" id="PTHR45753">
    <property type="entry name" value="ORNITHINE CARBAMOYLTRANSFERASE, MITOCHONDRIAL"/>
    <property type="match status" value="1"/>
</dbReference>
<dbReference type="Pfam" id="PF00185">
    <property type="entry name" value="OTCace"/>
    <property type="match status" value="1"/>
</dbReference>
<dbReference type="Pfam" id="PF02729">
    <property type="entry name" value="OTCace_N"/>
    <property type="match status" value="1"/>
</dbReference>
<dbReference type="PRINTS" id="PR00100">
    <property type="entry name" value="AOTCASE"/>
</dbReference>
<dbReference type="PRINTS" id="PR00102">
    <property type="entry name" value="OTCASE"/>
</dbReference>
<dbReference type="SUPFAM" id="SSF53671">
    <property type="entry name" value="Aspartate/ornithine carbamoyltransferase"/>
    <property type="match status" value="1"/>
</dbReference>
<dbReference type="PROSITE" id="PS00097">
    <property type="entry name" value="CARBAMOYLTRANSFERASE"/>
    <property type="match status" value="1"/>
</dbReference>
<evidence type="ECO:0000250" key="1"/>
<evidence type="ECO:0000255" key="2">
    <source>
        <dbReference type="HAMAP-Rule" id="MF_01109"/>
    </source>
</evidence>
<protein>
    <recommendedName>
        <fullName evidence="2">Ornithine carbamoyltransferase</fullName>
        <shortName evidence="2">OTCase</shortName>
        <ecNumber evidence="2">2.1.3.3</ecNumber>
    </recommendedName>
</protein>
<name>OTC_ECOHS</name>
<keyword id="KW-0028">Amino-acid biosynthesis</keyword>
<keyword id="KW-0055">Arginine biosynthesis</keyword>
<keyword id="KW-0963">Cytoplasm</keyword>
<keyword id="KW-0808">Transferase</keyword>
<proteinExistence type="inferred from homology"/>
<reference key="1">
    <citation type="journal article" date="2008" name="J. Bacteriol.">
        <title>The pangenome structure of Escherichia coli: comparative genomic analysis of E. coli commensal and pathogenic isolates.</title>
        <authorList>
            <person name="Rasko D.A."/>
            <person name="Rosovitz M.J."/>
            <person name="Myers G.S.A."/>
            <person name="Mongodin E.F."/>
            <person name="Fricke W.F."/>
            <person name="Gajer P."/>
            <person name="Crabtree J."/>
            <person name="Sebaihia M."/>
            <person name="Thomson N.R."/>
            <person name="Chaudhuri R."/>
            <person name="Henderson I.R."/>
            <person name="Sperandio V."/>
            <person name="Ravel J."/>
        </authorList>
    </citation>
    <scope>NUCLEOTIDE SEQUENCE [LARGE SCALE GENOMIC DNA]</scope>
    <source>
        <strain>HS</strain>
    </source>
</reference>
<accession>A8A810</accession>
<organism>
    <name type="scientific">Escherichia coli O9:H4 (strain HS)</name>
    <dbReference type="NCBI Taxonomy" id="331112"/>
    <lineage>
        <taxon>Bacteria</taxon>
        <taxon>Pseudomonadati</taxon>
        <taxon>Pseudomonadota</taxon>
        <taxon>Gammaproteobacteria</taxon>
        <taxon>Enterobacterales</taxon>
        <taxon>Enterobacteriaceae</taxon>
        <taxon>Escherichia</taxon>
    </lineage>
</organism>